<reference key="1">
    <citation type="journal article" date="2003" name="Nature">
        <title>The genome sequence of the filamentous fungus Neurospora crassa.</title>
        <authorList>
            <person name="Galagan J.E."/>
            <person name="Calvo S.E."/>
            <person name="Borkovich K.A."/>
            <person name="Selker E.U."/>
            <person name="Read N.D."/>
            <person name="Jaffe D.B."/>
            <person name="FitzHugh W."/>
            <person name="Ma L.-J."/>
            <person name="Smirnov S."/>
            <person name="Purcell S."/>
            <person name="Rehman B."/>
            <person name="Elkins T."/>
            <person name="Engels R."/>
            <person name="Wang S."/>
            <person name="Nielsen C.B."/>
            <person name="Butler J."/>
            <person name="Endrizzi M."/>
            <person name="Qui D."/>
            <person name="Ianakiev P."/>
            <person name="Bell-Pedersen D."/>
            <person name="Nelson M.A."/>
            <person name="Werner-Washburne M."/>
            <person name="Selitrennikoff C.P."/>
            <person name="Kinsey J.A."/>
            <person name="Braun E.L."/>
            <person name="Zelter A."/>
            <person name="Schulte U."/>
            <person name="Kothe G.O."/>
            <person name="Jedd G."/>
            <person name="Mewes H.-W."/>
            <person name="Staben C."/>
            <person name="Marcotte E."/>
            <person name="Greenberg D."/>
            <person name="Roy A."/>
            <person name="Foley K."/>
            <person name="Naylor J."/>
            <person name="Stange-Thomann N."/>
            <person name="Barrett R."/>
            <person name="Gnerre S."/>
            <person name="Kamal M."/>
            <person name="Kamvysselis M."/>
            <person name="Mauceli E.W."/>
            <person name="Bielke C."/>
            <person name="Rudd S."/>
            <person name="Frishman D."/>
            <person name="Krystofova S."/>
            <person name="Rasmussen C."/>
            <person name="Metzenberg R.L."/>
            <person name="Perkins D.D."/>
            <person name="Kroken S."/>
            <person name="Cogoni C."/>
            <person name="Macino G."/>
            <person name="Catcheside D.E.A."/>
            <person name="Li W."/>
            <person name="Pratt R.J."/>
            <person name="Osmani S.A."/>
            <person name="DeSouza C.P.C."/>
            <person name="Glass N.L."/>
            <person name="Orbach M.J."/>
            <person name="Berglund J.A."/>
            <person name="Voelker R."/>
            <person name="Yarden O."/>
            <person name="Plamann M."/>
            <person name="Seiler S."/>
            <person name="Dunlap J.C."/>
            <person name="Radford A."/>
            <person name="Aramayo R."/>
            <person name="Natvig D.O."/>
            <person name="Alex L.A."/>
            <person name="Mannhaupt G."/>
            <person name="Ebbole D.J."/>
            <person name="Freitag M."/>
            <person name="Paulsen I."/>
            <person name="Sachs M.S."/>
            <person name="Lander E.S."/>
            <person name="Nusbaum C."/>
            <person name="Birren B.W."/>
        </authorList>
    </citation>
    <scope>NUCLEOTIDE SEQUENCE [LARGE SCALE GENOMIC DNA]</scope>
    <source>
        <strain>ATCC 24698 / 74-OR23-1A / CBS 708.71 / DSM 1257 / FGSC 987</strain>
    </source>
</reference>
<gene>
    <name evidence="4" type="primary">ptr-4</name>
    <name evidence="1" type="synonym">pfa4</name>
    <name type="ORF">NCU02118</name>
</gene>
<accession>Q7SCY6</accession>
<sequence>MTNLQTGPTTRGLQRFAIPAVCGLIIFLGYYSQYLFNTSADLAPGPLTCRESLIFNILLVCLWLTYYQACTVDPGQYKFPPKEKEDGDNNNKRGGRGPQKAKWCKKCDAPKPPRAHHCRHCARCIPRMDHHCPWTGNCVSLQTFPHFLRFLVYTNAALVYFARLLWTRLYYGLWDQRHVPAYLGPSVGALLGCTMLSIAWFATQFALMVLLVTTVRSWMLGKTMIEEWEAERHETLLARSYDGDDYWGADGHGGFVPVKVEFPYDNGFWSNMAQAMGTNNFLRWFLPVGGGGPKISNDTPWKGTGWEYEENGFNDRVGMWPPPDPEKLRRERAGAGGKWPGARENLNTEKPEVDYYRSSEDMKTAFKRRQQEDLRRRQQRRQHSSEEDEIMAELEEDEGYEQRSRTRSPPQDGRAWMNSEGDTLWDYGVDVDEEENYGYPGQGVSESLPLVKTATGYNDGQGDEDEDVPLAELIRRRKVKSNGVHE</sequence>
<dbReference type="EC" id="2.3.1.225" evidence="1"/>
<dbReference type="EMBL" id="CM002236">
    <property type="protein sequence ID" value="EAA34619.1"/>
    <property type="molecule type" value="Genomic_DNA"/>
</dbReference>
<dbReference type="RefSeq" id="XP_963855.1">
    <property type="nucleotide sequence ID" value="XM_958762.2"/>
</dbReference>
<dbReference type="FunCoup" id="Q7SCY6">
    <property type="interactions" value="21"/>
</dbReference>
<dbReference type="STRING" id="367110.Q7SCY6"/>
<dbReference type="PaxDb" id="5141-EFNCRP00000001158"/>
<dbReference type="EnsemblFungi" id="EAA34619">
    <property type="protein sequence ID" value="EAA34619"/>
    <property type="gene ID" value="NCU02118"/>
</dbReference>
<dbReference type="GeneID" id="3880004"/>
<dbReference type="KEGG" id="ncr:NCU02118"/>
<dbReference type="VEuPathDB" id="FungiDB:NCU02118"/>
<dbReference type="HOGENOM" id="CLU_027721_8_1_1"/>
<dbReference type="InParanoid" id="Q7SCY6"/>
<dbReference type="OrthoDB" id="331948at2759"/>
<dbReference type="Proteomes" id="UP000001805">
    <property type="component" value="Chromosome 1, Linkage Group I"/>
</dbReference>
<dbReference type="GO" id="GO:0005783">
    <property type="term" value="C:endoplasmic reticulum"/>
    <property type="evidence" value="ECO:0000318"/>
    <property type="project" value="GO_Central"/>
</dbReference>
<dbReference type="GO" id="GO:0005789">
    <property type="term" value="C:endoplasmic reticulum membrane"/>
    <property type="evidence" value="ECO:0007669"/>
    <property type="project" value="UniProtKB-SubCell"/>
</dbReference>
<dbReference type="GO" id="GO:0005794">
    <property type="term" value="C:Golgi apparatus"/>
    <property type="evidence" value="ECO:0000318"/>
    <property type="project" value="GO_Central"/>
</dbReference>
<dbReference type="GO" id="GO:0019706">
    <property type="term" value="F:protein-cysteine S-palmitoyltransferase activity"/>
    <property type="evidence" value="ECO:0000318"/>
    <property type="project" value="GO_Central"/>
</dbReference>
<dbReference type="GO" id="GO:0006612">
    <property type="term" value="P:protein targeting to membrane"/>
    <property type="evidence" value="ECO:0000318"/>
    <property type="project" value="GO_Central"/>
</dbReference>
<dbReference type="HAMAP" id="MF_03199">
    <property type="entry name" value="DHHC_PAT_PFA4"/>
    <property type="match status" value="1"/>
</dbReference>
<dbReference type="InterPro" id="IPR001594">
    <property type="entry name" value="Palmitoyltrfase_DHHC"/>
</dbReference>
<dbReference type="InterPro" id="IPR033682">
    <property type="entry name" value="PFA4"/>
</dbReference>
<dbReference type="InterPro" id="IPR039859">
    <property type="entry name" value="PFA4/ZDH16/20/ERF2-like"/>
</dbReference>
<dbReference type="PANTHER" id="PTHR12246">
    <property type="entry name" value="PALMITOYLTRANSFERASE ZDHHC16"/>
    <property type="match status" value="1"/>
</dbReference>
<dbReference type="Pfam" id="PF01529">
    <property type="entry name" value="DHHC"/>
    <property type="match status" value="1"/>
</dbReference>
<dbReference type="PROSITE" id="PS50216">
    <property type="entry name" value="DHHC"/>
    <property type="match status" value="1"/>
</dbReference>
<name>PFA4_NEUCR</name>
<comment type="function">
    <text evidence="1">Mediates the reversible addition of palmitate to target proteins, thereby regulating their membrane association and biological function.</text>
</comment>
<comment type="catalytic activity">
    <reaction evidence="1">
        <text>L-cysteinyl-[protein] + hexadecanoyl-CoA = S-hexadecanoyl-L-cysteinyl-[protein] + CoA</text>
        <dbReference type="Rhea" id="RHEA:36683"/>
        <dbReference type="Rhea" id="RHEA-COMP:10131"/>
        <dbReference type="Rhea" id="RHEA-COMP:11032"/>
        <dbReference type="ChEBI" id="CHEBI:29950"/>
        <dbReference type="ChEBI" id="CHEBI:57287"/>
        <dbReference type="ChEBI" id="CHEBI:57379"/>
        <dbReference type="ChEBI" id="CHEBI:74151"/>
        <dbReference type="EC" id="2.3.1.225"/>
    </reaction>
</comment>
<comment type="subcellular location">
    <subcellularLocation>
        <location evidence="1">Endoplasmic reticulum membrane</location>
        <topology evidence="1">Multi-pass membrane protein</topology>
    </subcellularLocation>
</comment>
<comment type="domain">
    <text evidence="1">The DHHC domain is required for palmitoyltransferase activity.</text>
</comment>
<comment type="similarity">
    <text evidence="1">Belongs to the DHHC palmitoyltransferase family. PFA4 subfamily.</text>
</comment>
<keyword id="KW-0012">Acyltransferase</keyword>
<keyword id="KW-0256">Endoplasmic reticulum</keyword>
<keyword id="KW-0449">Lipoprotein</keyword>
<keyword id="KW-0472">Membrane</keyword>
<keyword id="KW-0564">Palmitate</keyword>
<keyword id="KW-1185">Reference proteome</keyword>
<keyword id="KW-0808">Transferase</keyword>
<keyword id="KW-0812">Transmembrane</keyword>
<keyword id="KW-1133">Transmembrane helix</keyword>
<protein>
    <recommendedName>
        <fullName evidence="1">Palmitoyltransferase pfa4</fullName>
        <ecNumber evidence="1">2.3.1.225</ecNumber>
    </recommendedName>
    <alternativeName>
        <fullName evidence="1">Protein S-acyltransferase</fullName>
        <shortName evidence="1">PAT</shortName>
    </alternativeName>
    <alternativeName>
        <fullName evidence="1">Protein fatty acyltransferase 4</fullName>
    </alternativeName>
</protein>
<proteinExistence type="inferred from homology"/>
<evidence type="ECO:0000255" key="1">
    <source>
        <dbReference type="HAMAP-Rule" id="MF_03199"/>
    </source>
</evidence>
<evidence type="ECO:0000255" key="2">
    <source>
        <dbReference type="PROSITE-ProRule" id="PRU00067"/>
    </source>
</evidence>
<evidence type="ECO:0000256" key="3">
    <source>
        <dbReference type="SAM" id="MobiDB-lite"/>
    </source>
</evidence>
<evidence type="ECO:0000305" key="4"/>
<feature type="chain" id="PRO_0000212969" description="Palmitoyltransferase pfa4">
    <location>
        <begin position="1"/>
        <end position="486"/>
    </location>
</feature>
<feature type="topological domain" description="Cytoplasmic" evidence="1">
    <location>
        <begin position="1"/>
        <end position="15"/>
    </location>
</feature>
<feature type="transmembrane region" description="Helical" evidence="1">
    <location>
        <begin position="16"/>
        <end position="36"/>
    </location>
</feature>
<feature type="topological domain" description="Lumenal" evidence="1">
    <location>
        <begin position="37"/>
        <end position="51"/>
    </location>
</feature>
<feature type="transmembrane region" description="Helical" evidence="1">
    <location>
        <begin position="52"/>
        <end position="72"/>
    </location>
</feature>
<feature type="topological domain" description="Cytoplasmic" evidence="1">
    <location>
        <begin position="73"/>
        <end position="146"/>
    </location>
</feature>
<feature type="transmembrane region" description="Helical" evidence="1">
    <location>
        <begin position="147"/>
        <end position="166"/>
    </location>
</feature>
<feature type="topological domain" description="Lumenal" evidence="1">
    <location>
        <begin position="167"/>
        <end position="178"/>
    </location>
</feature>
<feature type="transmembrane region" description="Helical" evidence="1">
    <location>
        <begin position="179"/>
        <end position="201"/>
    </location>
</feature>
<feature type="topological domain" description="Cytoplasmic" evidence="1">
    <location>
        <begin position="202"/>
        <end position="486"/>
    </location>
</feature>
<feature type="domain" description="DHHC" evidence="2">
    <location>
        <begin position="102"/>
        <end position="152"/>
    </location>
</feature>
<feature type="region of interest" description="Disordered" evidence="3">
    <location>
        <begin position="81"/>
        <end position="101"/>
    </location>
</feature>
<feature type="region of interest" description="Disordered" evidence="3">
    <location>
        <begin position="314"/>
        <end position="420"/>
    </location>
</feature>
<feature type="compositionally biased region" description="Basic and acidic residues" evidence="3">
    <location>
        <begin position="81"/>
        <end position="91"/>
    </location>
</feature>
<feature type="compositionally biased region" description="Basic and acidic residues" evidence="3">
    <location>
        <begin position="324"/>
        <end position="333"/>
    </location>
</feature>
<feature type="compositionally biased region" description="Basic and acidic residues" evidence="3">
    <location>
        <begin position="346"/>
        <end position="376"/>
    </location>
</feature>
<feature type="compositionally biased region" description="Acidic residues" evidence="3">
    <location>
        <begin position="386"/>
        <end position="399"/>
    </location>
</feature>
<feature type="active site" description="S-palmitoyl cysteine intermediate" evidence="1">
    <location>
        <position position="132"/>
    </location>
</feature>
<organism>
    <name type="scientific">Neurospora crassa (strain ATCC 24698 / 74-OR23-1A / CBS 708.71 / DSM 1257 / FGSC 987)</name>
    <dbReference type="NCBI Taxonomy" id="367110"/>
    <lineage>
        <taxon>Eukaryota</taxon>
        <taxon>Fungi</taxon>
        <taxon>Dikarya</taxon>
        <taxon>Ascomycota</taxon>
        <taxon>Pezizomycotina</taxon>
        <taxon>Sordariomycetes</taxon>
        <taxon>Sordariomycetidae</taxon>
        <taxon>Sordariales</taxon>
        <taxon>Sordariaceae</taxon>
        <taxon>Neurospora</taxon>
    </lineage>
</organism>